<gene>
    <name evidence="1" type="primary">murC</name>
    <name type="ordered locus">RHA1_ro01087</name>
</gene>
<name>MURC_RHOJR</name>
<evidence type="ECO:0000255" key="1">
    <source>
        <dbReference type="HAMAP-Rule" id="MF_00046"/>
    </source>
</evidence>
<accession>Q0SHS2</accession>
<dbReference type="EC" id="6.3.2.8" evidence="1"/>
<dbReference type="EMBL" id="CP000431">
    <property type="protein sequence ID" value="ABG92914.1"/>
    <property type="molecule type" value="Genomic_DNA"/>
</dbReference>
<dbReference type="RefSeq" id="WP_009473736.1">
    <property type="nucleotide sequence ID" value="NC_008268.1"/>
</dbReference>
<dbReference type="SMR" id="Q0SHS2"/>
<dbReference type="KEGG" id="rha:RHA1_ro01087"/>
<dbReference type="eggNOG" id="COG0773">
    <property type="taxonomic scope" value="Bacteria"/>
</dbReference>
<dbReference type="HOGENOM" id="CLU_028104_2_2_11"/>
<dbReference type="OrthoDB" id="9804126at2"/>
<dbReference type="UniPathway" id="UPA00219"/>
<dbReference type="Proteomes" id="UP000008710">
    <property type="component" value="Chromosome"/>
</dbReference>
<dbReference type="GO" id="GO:0005737">
    <property type="term" value="C:cytoplasm"/>
    <property type="evidence" value="ECO:0007669"/>
    <property type="project" value="UniProtKB-SubCell"/>
</dbReference>
<dbReference type="GO" id="GO:0005524">
    <property type="term" value="F:ATP binding"/>
    <property type="evidence" value="ECO:0007669"/>
    <property type="project" value="UniProtKB-UniRule"/>
</dbReference>
<dbReference type="GO" id="GO:0008763">
    <property type="term" value="F:UDP-N-acetylmuramate-L-alanine ligase activity"/>
    <property type="evidence" value="ECO:0007669"/>
    <property type="project" value="UniProtKB-UniRule"/>
</dbReference>
<dbReference type="GO" id="GO:0051301">
    <property type="term" value="P:cell division"/>
    <property type="evidence" value="ECO:0007669"/>
    <property type="project" value="UniProtKB-KW"/>
</dbReference>
<dbReference type="GO" id="GO:0071555">
    <property type="term" value="P:cell wall organization"/>
    <property type="evidence" value="ECO:0007669"/>
    <property type="project" value="UniProtKB-KW"/>
</dbReference>
<dbReference type="GO" id="GO:0009252">
    <property type="term" value="P:peptidoglycan biosynthetic process"/>
    <property type="evidence" value="ECO:0007669"/>
    <property type="project" value="UniProtKB-UniRule"/>
</dbReference>
<dbReference type="GO" id="GO:0008360">
    <property type="term" value="P:regulation of cell shape"/>
    <property type="evidence" value="ECO:0007669"/>
    <property type="project" value="UniProtKB-KW"/>
</dbReference>
<dbReference type="Gene3D" id="3.90.190.20">
    <property type="entry name" value="Mur ligase, C-terminal domain"/>
    <property type="match status" value="1"/>
</dbReference>
<dbReference type="Gene3D" id="3.40.1190.10">
    <property type="entry name" value="Mur-like, catalytic domain"/>
    <property type="match status" value="1"/>
</dbReference>
<dbReference type="Gene3D" id="3.40.50.720">
    <property type="entry name" value="NAD(P)-binding Rossmann-like Domain"/>
    <property type="match status" value="1"/>
</dbReference>
<dbReference type="HAMAP" id="MF_00046">
    <property type="entry name" value="MurC"/>
    <property type="match status" value="1"/>
</dbReference>
<dbReference type="InterPro" id="IPR036565">
    <property type="entry name" value="Mur-like_cat_sf"/>
</dbReference>
<dbReference type="InterPro" id="IPR004101">
    <property type="entry name" value="Mur_ligase_C"/>
</dbReference>
<dbReference type="InterPro" id="IPR036615">
    <property type="entry name" value="Mur_ligase_C_dom_sf"/>
</dbReference>
<dbReference type="InterPro" id="IPR013221">
    <property type="entry name" value="Mur_ligase_cen"/>
</dbReference>
<dbReference type="InterPro" id="IPR000713">
    <property type="entry name" value="Mur_ligase_N"/>
</dbReference>
<dbReference type="InterPro" id="IPR050061">
    <property type="entry name" value="MurCDEF_pg_biosynth"/>
</dbReference>
<dbReference type="InterPro" id="IPR005758">
    <property type="entry name" value="UDP-N-AcMur_Ala_ligase_MurC"/>
</dbReference>
<dbReference type="NCBIfam" id="TIGR01082">
    <property type="entry name" value="murC"/>
    <property type="match status" value="1"/>
</dbReference>
<dbReference type="PANTHER" id="PTHR43445:SF3">
    <property type="entry name" value="UDP-N-ACETYLMURAMATE--L-ALANINE LIGASE"/>
    <property type="match status" value="1"/>
</dbReference>
<dbReference type="PANTHER" id="PTHR43445">
    <property type="entry name" value="UDP-N-ACETYLMURAMATE--L-ALANINE LIGASE-RELATED"/>
    <property type="match status" value="1"/>
</dbReference>
<dbReference type="Pfam" id="PF01225">
    <property type="entry name" value="Mur_ligase"/>
    <property type="match status" value="1"/>
</dbReference>
<dbReference type="Pfam" id="PF02875">
    <property type="entry name" value="Mur_ligase_C"/>
    <property type="match status" value="1"/>
</dbReference>
<dbReference type="Pfam" id="PF08245">
    <property type="entry name" value="Mur_ligase_M"/>
    <property type="match status" value="1"/>
</dbReference>
<dbReference type="SUPFAM" id="SSF51984">
    <property type="entry name" value="MurCD N-terminal domain"/>
    <property type="match status" value="1"/>
</dbReference>
<dbReference type="SUPFAM" id="SSF53623">
    <property type="entry name" value="MurD-like peptide ligases, catalytic domain"/>
    <property type="match status" value="1"/>
</dbReference>
<dbReference type="SUPFAM" id="SSF53244">
    <property type="entry name" value="MurD-like peptide ligases, peptide-binding domain"/>
    <property type="match status" value="1"/>
</dbReference>
<proteinExistence type="inferred from homology"/>
<reference key="1">
    <citation type="journal article" date="2006" name="Proc. Natl. Acad. Sci. U.S.A.">
        <title>The complete genome of Rhodococcus sp. RHA1 provides insights into a catabolic powerhouse.</title>
        <authorList>
            <person name="McLeod M.P."/>
            <person name="Warren R.L."/>
            <person name="Hsiao W.W.L."/>
            <person name="Araki N."/>
            <person name="Myhre M."/>
            <person name="Fernandes C."/>
            <person name="Miyazawa D."/>
            <person name="Wong W."/>
            <person name="Lillquist A.L."/>
            <person name="Wang D."/>
            <person name="Dosanjh M."/>
            <person name="Hara H."/>
            <person name="Petrescu A."/>
            <person name="Morin R.D."/>
            <person name="Yang G."/>
            <person name="Stott J.M."/>
            <person name="Schein J.E."/>
            <person name="Shin H."/>
            <person name="Smailus D."/>
            <person name="Siddiqui A.S."/>
            <person name="Marra M.A."/>
            <person name="Jones S.J.M."/>
            <person name="Holt R."/>
            <person name="Brinkman F.S.L."/>
            <person name="Miyauchi K."/>
            <person name="Fukuda M."/>
            <person name="Davies J.E."/>
            <person name="Mohn W.W."/>
            <person name="Eltis L.D."/>
        </authorList>
    </citation>
    <scope>NUCLEOTIDE SEQUENCE [LARGE SCALE GENOMIC DNA]</scope>
    <source>
        <strain>RHA1</strain>
    </source>
</reference>
<protein>
    <recommendedName>
        <fullName evidence="1">UDP-N-acetylmuramate--L-alanine ligase</fullName>
        <ecNumber evidence="1">6.3.2.8</ecNumber>
    </recommendedName>
    <alternativeName>
        <fullName evidence="1">UDP-N-acetylmuramoyl-L-alanine synthetase</fullName>
    </alternativeName>
</protein>
<feature type="chain" id="PRO_0000336862" description="UDP-N-acetylmuramate--L-alanine ligase">
    <location>
        <begin position="1"/>
        <end position="503"/>
    </location>
</feature>
<feature type="binding site" evidence="1">
    <location>
        <begin position="120"/>
        <end position="126"/>
    </location>
    <ligand>
        <name>ATP</name>
        <dbReference type="ChEBI" id="CHEBI:30616"/>
    </ligand>
</feature>
<sequence length="503" mass="52553">MTDLPAELERVHMVGIGGAGMSGIARILLARGGQVSGSDAKESRGVLALRARGAQVRIGHDAGALDLLPGGPTVVVTTHAAIPKDNPELVEAARRGIPVILRPAVLASLMQGHRTLLVSGTHGKTSTTSMLVVALQHCGFDPSFAVGGELNEAGTNAHHGSGDVFVAEADESDGSLLQYEPDVVVVTNVEADHLDYFGSTEAYIQVFDDFAARLSPGGLLVACLDDPGSAALAQRVAARGLPGVRVLGYGSAEDADGAFASVDGVEVGARLLSFEARDVGGVLQFQLAGEQSPRTVRMGVPGRHMALNALAALLAAREAGADVDEILEGIAGFGGVHRRFQFTGREHGVRVFDDYAHHPTEVRAVLGAAADLVRQPHEADRRESEDSVRSGKVIVVFQPHLYSRTATFAEEFGHALDLADEVVVLDVYGAREEPLPGVSGALVALSVSKPVHYQPDLSQAPRQVAALASPGDVVITMGAGDVTMLGNQILDALRAAPHHHPSR</sequence>
<keyword id="KW-0067">ATP-binding</keyword>
<keyword id="KW-0131">Cell cycle</keyword>
<keyword id="KW-0132">Cell division</keyword>
<keyword id="KW-0133">Cell shape</keyword>
<keyword id="KW-0961">Cell wall biogenesis/degradation</keyword>
<keyword id="KW-0963">Cytoplasm</keyword>
<keyword id="KW-0436">Ligase</keyword>
<keyword id="KW-0547">Nucleotide-binding</keyword>
<keyword id="KW-0573">Peptidoglycan synthesis</keyword>
<comment type="function">
    <text evidence="1">Cell wall formation.</text>
</comment>
<comment type="catalytic activity">
    <reaction evidence="1">
        <text>UDP-N-acetyl-alpha-D-muramate + L-alanine + ATP = UDP-N-acetyl-alpha-D-muramoyl-L-alanine + ADP + phosphate + H(+)</text>
        <dbReference type="Rhea" id="RHEA:23372"/>
        <dbReference type="ChEBI" id="CHEBI:15378"/>
        <dbReference type="ChEBI" id="CHEBI:30616"/>
        <dbReference type="ChEBI" id="CHEBI:43474"/>
        <dbReference type="ChEBI" id="CHEBI:57972"/>
        <dbReference type="ChEBI" id="CHEBI:70757"/>
        <dbReference type="ChEBI" id="CHEBI:83898"/>
        <dbReference type="ChEBI" id="CHEBI:456216"/>
        <dbReference type="EC" id="6.3.2.8"/>
    </reaction>
</comment>
<comment type="pathway">
    <text evidence="1">Cell wall biogenesis; peptidoglycan biosynthesis.</text>
</comment>
<comment type="subcellular location">
    <subcellularLocation>
        <location evidence="1">Cytoplasm</location>
    </subcellularLocation>
</comment>
<comment type="similarity">
    <text evidence="1">Belongs to the MurCDEF family.</text>
</comment>
<organism>
    <name type="scientific">Rhodococcus jostii (strain RHA1)</name>
    <dbReference type="NCBI Taxonomy" id="101510"/>
    <lineage>
        <taxon>Bacteria</taxon>
        <taxon>Bacillati</taxon>
        <taxon>Actinomycetota</taxon>
        <taxon>Actinomycetes</taxon>
        <taxon>Mycobacteriales</taxon>
        <taxon>Nocardiaceae</taxon>
        <taxon>Rhodococcus</taxon>
    </lineage>
</organism>